<feature type="chain" id="PRO_1000018569" description="Indole-3-glycerol phosphate synthase">
    <location>
        <begin position="1"/>
        <end position="267"/>
    </location>
</feature>
<accession>A1WH73</accession>
<gene>
    <name evidence="1" type="primary">trpC</name>
    <name type="ordered locus">Veis_1209</name>
</gene>
<comment type="catalytic activity">
    <reaction evidence="1">
        <text>1-(2-carboxyphenylamino)-1-deoxy-D-ribulose 5-phosphate + H(+) = (1S,2R)-1-C-(indol-3-yl)glycerol 3-phosphate + CO2 + H2O</text>
        <dbReference type="Rhea" id="RHEA:23476"/>
        <dbReference type="ChEBI" id="CHEBI:15377"/>
        <dbReference type="ChEBI" id="CHEBI:15378"/>
        <dbReference type="ChEBI" id="CHEBI:16526"/>
        <dbReference type="ChEBI" id="CHEBI:58613"/>
        <dbReference type="ChEBI" id="CHEBI:58866"/>
        <dbReference type="EC" id="4.1.1.48"/>
    </reaction>
</comment>
<comment type="pathway">
    <text evidence="1">Amino-acid biosynthesis; L-tryptophan biosynthesis; L-tryptophan from chorismate: step 4/5.</text>
</comment>
<comment type="similarity">
    <text evidence="1">Belongs to the TrpC family.</text>
</comment>
<keyword id="KW-0028">Amino-acid biosynthesis</keyword>
<keyword id="KW-0057">Aromatic amino acid biosynthesis</keyword>
<keyword id="KW-0210">Decarboxylase</keyword>
<keyword id="KW-0456">Lyase</keyword>
<keyword id="KW-1185">Reference proteome</keyword>
<keyword id="KW-0822">Tryptophan biosynthesis</keyword>
<proteinExistence type="inferred from homology"/>
<dbReference type="EC" id="4.1.1.48" evidence="1"/>
<dbReference type="EMBL" id="CP000542">
    <property type="protein sequence ID" value="ABM56980.1"/>
    <property type="molecule type" value="Genomic_DNA"/>
</dbReference>
<dbReference type="RefSeq" id="WP_011808991.1">
    <property type="nucleotide sequence ID" value="NC_008786.1"/>
</dbReference>
<dbReference type="SMR" id="A1WH73"/>
<dbReference type="STRING" id="391735.Veis_1209"/>
<dbReference type="GeneID" id="76459861"/>
<dbReference type="KEGG" id="vei:Veis_1209"/>
<dbReference type="eggNOG" id="COG0134">
    <property type="taxonomic scope" value="Bacteria"/>
</dbReference>
<dbReference type="HOGENOM" id="CLU_034247_2_0_4"/>
<dbReference type="OrthoDB" id="9804217at2"/>
<dbReference type="UniPathway" id="UPA00035">
    <property type="reaction ID" value="UER00043"/>
</dbReference>
<dbReference type="Proteomes" id="UP000000374">
    <property type="component" value="Chromosome"/>
</dbReference>
<dbReference type="GO" id="GO:0004425">
    <property type="term" value="F:indole-3-glycerol-phosphate synthase activity"/>
    <property type="evidence" value="ECO:0007669"/>
    <property type="project" value="UniProtKB-UniRule"/>
</dbReference>
<dbReference type="GO" id="GO:0004640">
    <property type="term" value="F:phosphoribosylanthranilate isomerase activity"/>
    <property type="evidence" value="ECO:0007669"/>
    <property type="project" value="TreeGrafter"/>
</dbReference>
<dbReference type="GO" id="GO:0000162">
    <property type="term" value="P:L-tryptophan biosynthetic process"/>
    <property type="evidence" value="ECO:0007669"/>
    <property type="project" value="UniProtKB-UniRule"/>
</dbReference>
<dbReference type="CDD" id="cd00331">
    <property type="entry name" value="IGPS"/>
    <property type="match status" value="1"/>
</dbReference>
<dbReference type="FunFam" id="3.20.20.70:FF:000024">
    <property type="entry name" value="Indole-3-glycerol phosphate synthase"/>
    <property type="match status" value="1"/>
</dbReference>
<dbReference type="Gene3D" id="3.20.20.70">
    <property type="entry name" value="Aldolase class I"/>
    <property type="match status" value="1"/>
</dbReference>
<dbReference type="HAMAP" id="MF_00134_B">
    <property type="entry name" value="IGPS_B"/>
    <property type="match status" value="1"/>
</dbReference>
<dbReference type="InterPro" id="IPR013785">
    <property type="entry name" value="Aldolase_TIM"/>
</dbReference>
<dbReference type="InterPro" id="IPR045186">
    <property type="entry name" value="Indole-3-glycerol_P_synth"/>
</dbReference>
<dbReference type="InterPro" id="IPR013798">
    <property type="entry name" value="Indole-3-glycerol_P_synth_dom"/>
</dbReference>
<dbReference type="InterPro" id="IPR001468">
    <property type="entry name" value="Indole-3-GlycerolPSynthase_CS"/>
</dbReference>
<dbReference type="InterPro" id="IPR011060">
    <property type="entry name" value="RibuloseP-bd_barrel"/>
</dbReference>
<dbReference type="NCBIfam" id="NF001373">
    <property type="entry name" value="PRK00278.1-6"/>
    <property type="match status" value="1"/>
</dbReference>
<dbReference type="NCBIfam" id="NF001377">
    <property type="entry name" value="PRK00278.2-4"/>
    <property type="match status" value="1"/>
</dbReference>
<dbReference type="PANTHER" id="PTHR22854:SF2">
    <property type="entry name" value="INDOLE-3-GLYCEROL-PHOSPHATE SYNTHASE"/>
    <property type="match status" value="1"/>
</dbReference>
<dbReference type="PANTHER" id="PTHR22854">
    <property type="entry name" value="TRYPTOPHAN BIOSYNTHESIS PROTEIN"/>
    <property type="match status" value="1"/>
</dbReference>
<dbReference type="Pfam" id="PF00218">
    <property type="entry name" value="IGPS"/>
    <property type="match status" value="1"/>
</dbReference>
<dbReference type="SUPFAM" id="SSF51366">
    <property type="entry name" value="Ribulose-phoshate binding barrel"/>
    <property type="match status" value="1"/>
</dbReference>
<dbReference type="PROSITE" id="PS00614">
    <property type="entry name" value="IGPS"/>
    <property type="match status" value="1"/>
</dbReference>
<sequence length="267" mass="28745">MNDILDQIMAAKRAEVAAAQKRVPLAAVRADAESRVLTRDFEGALRAKISQGQAAVIAEIKKASPSKGLLRADFIAADIAQSYAEGDAGVSAACLSVLTDQAFFQGSIDYLKQARASCQLPVLRKDFLLDPYQVYEARAMGADAILLIAACLDDAQLADFEAIARSLDMAVLLEVHDRPELERALARCKTPLVGINNRNLRSFEVSLSTTLDMLADMPPERLPVTESGILTPQDVKTLRDAGVQAFLVGEAFMRAADPGLALARLFA</sequence>
<protein>
    <recommendedName>
        <fullName evidence="1">Indole-3-glycerol phosphate synthase</fullName>
        <shortName evidence="1">IGPS</shortName>
        <ecNumber evidence="1">4.1.1.48</ecNumber>
    </recommendedName>
</protein>
<name>TRPC_VEREI</name>
<evidence type="ECO:0000255" key="1">
    <source>
        <dbReference type="HAMAP-Rule" id="MF_00134"/>
    </source>
</evidence>
<organism>
    <name type="scientific">Verminephrobacter eiseniae (strain EF01-2)</name>
    <dbReference type="NCBI Taxonomy" id="391735"/>
    <lineage>
        <taxon>Bacteria</taxon>
        <taxon>Pseudomonadati</taxon>
        <taxon>Pseudomonadota</taxon>
        <taxon>Betaproteobacteria</taxon>
        <taxon>Burkholderiales</taxon>
        <taxon>Comamonadaceae</taxon>
        <taxon>Verminephrobacter</taxon>
    </lineage>
</organism>
<reference key="1">
    <citation type="submission" date="2006-12" db="EMBL/GenBank/DDBJ databases">
        <title>Complete sequence of chromosome 1 of Verminephrobacter eiseniae EF01-2.</title>
        <authorList>
            <person name="Copeland A."/>
            <person name="Lucas S."/>
            <person name="Lapidus A."/>
            <person name="Barry K."/>
            <person name="Detter J.C."/>
            <person name="Glavina del Rio T."/>
            <person name="Dalin E."/>
            <person name="Tice H."/>
            <person name="Pitluck S."/>
            <person name="Chertkov O."/>
            <person name="Brettin T."/>
            <person name="Bruce D."/>
            <person name="Han C."/>
            <person name="Tapia R."/>
            <person name="Gilna P."/>
            <person name="Schmutz J."/>
            <person name="Larimer F."/>
            <person name="Land M."/>
            <person name="Hauser L."/>
            <person name="Kyrpides N."/>
            <person name="Kim E."/>
            <person name="Stahl D."/>
            <person name="Richardson P."/>
        </authorList>
    </citation>
    <scope>NUCLEOTIDE SEQUENCE [LARGE SCALE GENOMIC DNA]</scope>
    <source>
        <strain>EF01-2</strain>
    </source>
</reference>